<sequence length="973" mass="107192">MSELKTISIRGAREHNLKGIDLDLPRNKLIVMTGLSGSGKSSLAFDTIYAEGQRRYVESLSAYARQFLEMMQKPDVDQIDGLSPAISIEQKTTSRNPRSTVGTVTEIYDYLRLLFARVGVPYSPATGLPIESQTVSQMVDRVLEFGEGTRLYMLAPLVRGRKGEYRKELAELMKKGFQRVKVDGQFYEIADVPALDKKYKHDIDVVVDRVVVRPDIGTRLADSIETCLTLADGLAIAEFADRPLPPEETSAGGSANKSLNETHERVLFSEKFACPVSGFTIPEIEPRLFSFNNPFGACTTCDGLGSQQKIDEALIVPEPNRTLRDGAIAPWAKSTSPYYNQTLEALGTVFGFKLGSRWSELSEEAQEAILHGTKDKITFHYQDGARSYNTTKTFEGIVPNLERRWKETDSAWAREEIERYMSAAPCPACAGYRLKPEALAVKIHALHIGEVSEMSIRAARDWFEVLPEHLSTKQNEIAVRILKEIRERLRFLNDVGLEYLSLSRNSGTLSGGESQRIRLASQIGSGLTGVLYVLDEPSIGLHQRDNARLLDTLRHLRDIGNTVIVVEHDEDAILTADYVVDIGPAAGIHGGEVIAEGTPSDIMSNPKSLTGKYLSGELSVAVPGERRKPKKKKEVTVVGARANNLKNVTASIPLGVFTAVTGVSGGGKSTFLIETLYKAAARRVMGARENPAEHDRIDGFEHIDKVIDIDQSPIGRTPRSNPATYTGAFTPIRDWFAGLPEAKARGYQPGRFSFNVKGGRCEACQGDGVIKIEMHFLPDVYVTCDVCHGKRYNRETLDVHFKGKSIADVLDMTVEEGVEFFAAVPAVRDKLVTLNQVGLGYIKIGQQANTLSGGEAQRVKLAKELSKRSTGRTLYILDEPTTGLHFHDVAKLLEVLHELVNQGNSVVVIEHNLEVIKTADWIIDFGPEGGDGGGEVIAQGTPEEVVKEPRSYTGQFLKELLERRPVKKVVAAE</sequence>
<accession>P56899</accession>
<evidence type="ECO:0000255" key="1">
    <source>
        <dbReference type="HAMAP-Rule" id="MF_00205"/>
    </source>
</evidence>
<evidence type="ECO:0000305" key="2"/>
<protein>
    <recommendedName>
        <fullName evidence="1">UvrABC system protein A</fullName>
        <shortName evidence="1">UvrA protein</shortName>
    </recommendedName>
    <alternativeName>
        <fullName evidence="1">Excinuclease ABC subunit A</fullName>
    </alternativeName>
</protein>
<reference key="1">
    <citation type="journal article" date="2001" name="Proc. Natl. Acad. Sci. U.S.A.">
        <title>Analysis of the chromosome sequence of the legume symbiont Sinorhizobium meliloti strain 1021.</title>
        <authorList>
            <person name="Capela D."/>
            <person name="Barloy-Hubler F."/>
            <person name="Gouzy J."/>
            <person name="Bothe G."/>
            <person name="Ampe F."/>
            <person name="Batut J."/>
            <person name="Boistard P."/>
            <person name="Becker A."/>
            <person name="Boutry M."/>
            <person name="Cadieu E."/>
            <person name="Dreano S."/>
            <person name="Gloux S."/>
            <person name="Godrie T."/>
            <person name="Goffeau A."/>
            <person name="Kahn D."/>
            <person name="Kiss E."/>
            <person name="Lelaure V."/>
            <person name="Masuy D."/>
            <person name="Pohl T."/>
            <person name="Portetelle D."/>
            <person name="Puehler A."/>
            <person name="Purnelle B."/>
            <person name="Ramsperger U."/>
            <person name="Renard C."/>
            <person name="Thebault P."/>
            <person name="Vandenbol M."/>
            <person name="Weidner S."/>
            <person name="Galibert F."/>
        </authorList>
    </citation>
    <scope>NUCLEOTIDE SEQUENCE [LARGE SCALE GENOMIC DNA]</scope>
    <source>
        <strain>1021</strain>
    </source>
</reference>
<reference key="2">
    <citation type="journal article" date="2001" name="Science">
        <title>The composite genome of the legume symbiont Sinorhizobium meliloti.</title>
        <authorList>
            <person name="Galibert F."/>
            <person name="Finan T.M."/>
            <person name="Long S.R."/>
            <person name="Puehler A."/>
            <person name="Abola P."/>
            <person name="Ampe F."/>
            <person name="Barloy-Hubler F."/>
            <person name="Barnett M.J."/>
            <person name="Becker A."/>
            <person name="Boistard P."/>
            <person name="Bothe G."/>
            <person name="Boutry M."/>
            <person name="Bowser L."/>
            <person name="Buhrmester J."/>
            <person name="Cadieu E."/>
            <person name="Capela D."/>
            <person name="Chain P."/>
            <person name="Cowie A."/>
            <person name="Davis R.W."/>
            <person name="Dreano S."/>
            <person name="Federspiel N.A."/>
            <person name="Fisher R.F."/>
            <person name="Gloux S."/>
            <person name="Godrie T."/>
            <person name="Goffeau A."/>
            <person name="Golding B."/>
            <person name="Gouzy J."/>
            <person name="Gurjal M."/>
            <person name="Hernandez-Lucas I."/>
            <person name="Hong A."/>
            <person name="Huizar L."/>
            <person name="Hyman R.W."/>
            <person name="Jones T."/>
            <person name="Kahn D."/>
            <person name="Kahn M.L."/>
            <person name="Kalman S."/>
            <person name="Keating D.H."/>
            <person name="Kiss E."/>
            <person name="Komp C."/>
            <person name="Lelaure V."/>
            <person name="Masuy D."/>
            <person name="Palm C."/>
            <person name="Peck M.C."/>
            <person name="Pohl T.M."/>
            <person name="Portetelle D."/>
            <person name="Purnelle B."/>
            <person name="Ramsperger U."/>
            <person name="Surzycki R."/>
            <person name="Thebault P."/>
            <person name="Vandenbol M."/>
            <person name="Vorhoelter F.J."/>
            <person name="Weidner S."/>
            <person name="Wells D.H."/>
            <person name="Wong K."/>
            <person name="Yeh K.-C."/>
            <person name="Batut J."/>
        </authorList>
    </citation>
    <scope>NUCLEOTIDE SEQUENCE [LARGE SCALE GENOMIC DNA]</scope>
    <source>
        <strain>1021</strain>
    </source>
</reference>
<reference key="3">
    <citation type="journal article" date="1999" name="Mol. Gen. Genet.">
        <title>Regulation of divergent transcription from the uvrA-ssb promoters in Sinorhizobium meliloti.</title>
        <authorList>
            <person name="Tapias A."/>
            <person name="Barbe J."/>
        </authorList>
    </citation>
    <scope>NUCLEOTIDE SEQUENCE [GENOMIC DNA] OF 1-140</scope>
    <source>
        <strain>2021</strain>
    </source>
</reference>
<name>UVRA_RHIME</name>
<comment type="function">
    <text evidence="1">The UvrABC repair system catalyzes the recognition and processing of DNA lesions. UvrA is an ATPase and a DNA-binding protein. A damage recognition complex composed of 2 UvrA and 2 UvrB subunits scans DNA for abnormalities. When the presence of a lesion has been verified by UvrB, the UvrA molecules dissociate.</text>
</comment>
<comment type="subunit">
    <text evidence="1">Forms a heterotetramer with UvrB during the search for lesions.</text>
</comment>
<comment type="subcellular location">
    <subcellularLocation>
        <location evidence="1">Cytoplasm</location>
    </subcellularLocation>
</comment>
<comment type="similarity">
    <text evidence="1">Belongs to the ABC transporter superfamily. UvrA family.</text>
</comment>
<gene>
    <name evidence="1" type="primary">uvrA</name>
    <name type="ordered locus">R01557</name>
    <name type="ORF">SMc01235</name>
</gene>
<proteinExistence type="inferred from homology"/>
<organism>
    <name type="scientific">Rhizobium meliloti (strain 1021)</name>
    <name type="common">Ensifer meliloti</name>
    <name type="synonym">Sinorhizobium meliloti</name>
    <dbReference type="NCBI Taxonomy" id="266834"/>
    <lineage>
        <taxon>Bacteria</taxon>
        <taxon>Pseudomonadati</taxon>
        <taxon>Pseudomonadota</taxon>
        <taxon>Alphaproteobacteria</taxon>
        <taxon>Hyphomicrobiales</taxon>
        <taxon>Rhizobiaceae</taxon>
        <taxon>Sinorhizobium/Ensifer group</taxon>
        <taxon>Sinorhizobium</taxon>
    </lineage>
</organism>
<feature type="chain" id="PRO_0000093082" description="UvrABC system protein A">
    <location>
        <begin position="1"/>
        <end position="973"/>
    </location>
</feature>
<feature type="domain" description="ABC transporter 1" evidence="1">
    <location>
        <begin position="331"/>
        <end position="609"/>
    </location>
</feature>
<feature type="domain" description="ABC transporter 2" evidence="1">
    <location>
        <begin position="629"/>
        <end position="958"/>
    </location>
</feature>
<feature type="zinc finger region" description="C4-type" evidence="1">
    <location>
        <begin position="761"/>
        <end position="787"/>
    </location>
</feature>
<feature type="binding site" evidence="1">
    <location>
        <begin position="34"/>
        <end position="41"/>
    </location>
    <ligand>
        <name>ATP</name>
        <dbReference type="ChEBI" id="CHEBI:30616"/>
    </ligand>
</feature>
<feature type="binding site" evidence="1">
    <location>
        <begin position="662"/>
        <end position="669"/>
    </location>
    <ligand>
        <name>ATP</name>
        <dbReference type="ChEBI" id="CHEBI:30616"/>
    </ligand>
</feature>
<feature type="sequence conflict" description="In Ref. 3; AAF03210." evidence="2" ref="3">
    <original>G</original>
    <variation>A</variation>
    <location>
        <position position="19"/>
    </location>
</feature>
<feature type="sequence conflict" description="In Ref. 3; AAF03210." evidence="2" ref="3">
    <original>F</original>
    <variation>S</variation>
    <location>
        <position position="67"/>
    </location>
</feature>
<keyword id="KW-0067">ATP-binding</keyword>
<keyword id="KW-0963">Cytoplasm</keyword>
<keyword id="KW-0227">DNA damage</keyword>
<keyword id="KW-0228">DNA excision</keyword>
<keyword id="KW-0234">DNA repair</keyword>
<keyword id="KW-0238">DNA-binding</keyword>
<keyword id="KW-0267">Excision nuclease</keyword>
<keyword id="KW-0479">Metal-binding</keyword>
<keyword id="KW-0547">Nucleotide-binding</keyword>
<keyword id="KW-1185">Reference proteome</keyword>
<keyword id="KW-0677">Repeat</keyword>
<keyword id="KW-0742">SOS response</keyword>
<keyword id="KW-0862">Zinc</keyword>
<keyword id="KW-0863">Zinc-finger</keyword>
<dbReference type="EMBL" id="AL591688">
    <property type="protein sequence ID" value="CAC46136.1"/>
    <property type="molecule type" value="Genomic_DNA"/>
</dbReference>
<dbReference type="EMBL" id="AF125162">
    <property type="protein sequence ID" value="AAF03210.1"/>
    <property type="molecule type" value="Genomic_DNA"/>
</dbReference>
<dbReference type="RefSeq" id="NP_385663.1">
    <property type="nucleotide sequence ID" value="NC_003047.1"/>
</dbReference>
<dbReference type="RefSeq" id="WP_003529545.1">
    <property type="nucleotide sequence ID" value="NC_003047.1"/>
</dbReference>
<dbReference type="SMR" id="P56899"/>
<dbReference type="EnsemblBacteria" id="CAC46136">
    <property type="protein sequence ID" value="CAC46136"/>
    <property type="gene ID" value="SMc01235"/>
</dbReference>
<dbReference type="GeneID" id="89575883"/>
<dbReference type="KEGG" id="sme:SMc01235"/>
<dbReference type="PATRIC" id="fig|266834.11.peg.2982"/>
<dbReference type="eggNOG" id="COG0178">
    <property type="taxonomic scope" value="Bacteria"/>
</dbReference>
<dbReference type="HOGENOM" id="CLU_001370_0_2_5"/>
<dbReference type="OrthoDB" id="9809851at2"/>
<dbReference type="Proteomes" id="UP000001976">
    <property type="component" value="Chromosome"/>
</dbReference>
<dbReference type="GO" id="GO:0005737">
    <property type="term" value="C:cytoplasm"/>
    <property type="evidence" value="ECO:0007669"/>
    <property type="project" value="UniProtKB-SubCell"/>
</dbReference>
<dbReference type="GO" id="GO:0009380">
    <property type="term" value="C:excinuclease repair complex"/>
    <property type="evidence" value="ECO:0007669"/>
    <property type="project" value="InterPro"/>
</dbReference>
<dbReference type="GO" id="GO:0005524">
    <property type="term" value="F:ATP binding"/>
    <property type="evidence" value="ECO:0007669"/>
    <property type="project" value="UniProtKB-UniRule"/>
</dbReference>
<dbReference type="GO" id="GO:0016887">
    <property type="term" value="F:ATP hydrolysis activity"/>
    <property type="evidence" value="ECO:0007669"/>
    <property type="project" value="InterPro"/>
</dbReference>
<dbReference type="GO" id="GO:0003677">
    <property type="term" value="F:DNA binding"/>
    <property type="evidence" value="ECO:0007669"/>
    <property type="project" value="UniProtKB-UniRule"/>
</dbReference>
<dbReference type="GO" id="GO:0009381">
    <property type="term" value="F:excinuclease ABC activity"/>
    <property type="evidence" value="ECO:0007669"/>
    <property type="project" value="UniProtKB-UniRule"/>
</dbReference>
<dbReference type="GO" id="GO:0008270">
    <property type="term" value="F:zinc ion binding"/>
    <property type="evidence" value="ECO:0007669"/>
    <property type="project" value="UniProtKB-UniRule"/>
</dbReference>
<dbReference type="GO" id="GO:0006289">
    <property type="term" value="P:nucleotide-excision repair"/>
    <property type="evidence" value="ECO:0007669"/>
    <property type="project" value="UniProtKB-UniRule"/>
</dbReference>
<dbReference type="GO" id="GO:0009432">
    <property type="term" value="P:SOS response"/>
    <property type="evidence" value="ECO:0007669"/>
    <property type="project" value="UniProtKB-UniRule"/>
</dbReference>
<dbReference type="CDD" id="cd03270">
    <property type="entry name" value="ABC_UvrA_I"/>
    <property type="match status" value="1"/>
</dbReference>
<dbReference type="CDD" id="cd03271">
    <property type="entry name" value="ABC_UvrA_II"/>
    <property type="match status" value="1"/>
</dbReference>
<dbReference type="FunFam" id="1.20.1580.10:FF:000002">
    <property type="entry name" value="UvrABC system protein A"/>
    <property type="match status" value="1"/>
</dbReference>
<dbReference type="Gene3D" id="1.10.8.280">
    <property type="entry name" value="ABC transporter ATPase domain-like"/>
    <property type="match status" value="1"/>
</dbReference>
<dbReference type="Gene3D" id="1.20.1580.10">
    <property type="entry name" value="ABC transporter ATPase like domain"/>
    <property type="match status" value="2"/>
</dbReference>
<dbReference type="Gene3D" id="3.30.1490.20">
    <property type="entry name" value="ATP-grasp fold, A domain"/>
    <property type="match status" value="1"/>
</dbReference>
<dbReference type="Gene3D" id="3.40.50.300">
    <property type="entry name" value="P-loop containing nucleotide triphosphate hydrolases"/>
    <property type="match status" value="2"/>
</dbReference>
<dbReference type="HAMAP" id="MF_00205">
    <property type="entry name" value="UvrA"/>
    <property type="match status" value="1"/>
</dbReference>
<dbReference type="InterPro" id="IPR003439">
    <property type="entry name" value="ABC_transporter-like_ATP-bd"/>
</dbReference>
<dbReference type="InterPro" id="IPR017871">
    <property type="entry name" value="ABC_transporter-like_CS"/>
</dbReference>
<dbReference type="InterPro" id="IPR013815">
    <property type="entry name" value="ATP_grasp_subdomain_1"/>
</dbReference>
<dbReference type="InterPro" id="IPR027417">
    <property type="entry name" value="P-loop_NTPase"/>
</dbReference>
<dbReference type="InterPro" id="IPR004602">
    <property type="entry name" value="UvrA"/>
</dbReference>
<dbReference type="InterPro" id="IPR041552">
    <property type="entry name" value="UvrA_DNA-bd"/>
</dbReference>
<dbReference type="InterPro" id="IPR041102">
    <property type="entry name" value="UvrA_inter"/>
</dbReference>
<dbReference type="NCBIfam" id="NF001503">
    <property type="entry name" value="PRK00349.1"/>
    <property type="match status" value="1"/>
</dbReference>
<dbReference type="NCBIfam" id="TIGR00630">
    <property type="entry name" value="uvra"/>
    <property type="match status" value="1"/>
</dbReference>
<dbReference type="PANTHER" id="PTHR43152">
    <property type="entry name" value="UVRABC SYSTEM PROTEIN A"/>
    <property type="match status" value="1"/>
</dbReference>
<dbReference type="PANTHER" id="PTHR43152:SF3">
    <property type="entry name" value="UVRABC SYSTEM PROTEIN A"/>
    <property type="match status" value="1"/>
</dbReference>
<dbReference type="Pfam" id="PF00005">
    <property type="entry name" value="ABC_tran"/>
    <property type="match status" value="1"/>
</dbReference>
<dbReference type="Pfam" id="PF17755">
    <property type="entry name" value="UvrA_DNA-bind"/>
    <property type="match status" value="1"/>
</dbReference>
<dbReference type="Pfam" id="PF17760">
    <property type="entry name" value="UvrA_inter"/>
    <property type="match status" value="1"/>
</dbReference>
<dbReference type="SUPFAM" id="SSF52540">
    <property type="entry name" value="P-loop containing nucleoside triphosphate hydrolases"/>
    <property type="match status" value="2"/>
</dbReference>
<dbReference type="PROSITE" id="PS00211">
    <property type="entry name" value="ABC_TRANSPORTER_1"/>
    <property type="match status" value="2"/>
</dbReference>
<dbReference type="PROSITE" id="PS50893">
    <property type="entry name" value="ABC_TRANSPORTER_2"/>
    <property type="match status" value="1"/>
</dbReference>